<feature type="chain" id="PRO_1000184733" description="ATP synthase subunit delta">
    <location>
        <begin position="1"/>
        <end position="181"/>
    </location>
</feature>
<name>ATPD_LACCB</name>
<evidence type="ECO:0000255" key="1">
    <source>
        <dbReference type="HAMAP-Rule" id="MF_01416"/>
    </source>
</evidence>
<gene>
    <name evidence="1" type="primary">atpH</name>
    <name type="ordered locus">LCABL_13850</name>
</gene>
<sequence>MAVTNQMVAPRYAKALLEAAKDQNQVETVHEELQALQSVFNDNPTILTIFDNARITAADKDALMTTLTKDASPLVANLLKLTQQYGRFGALPAIISAFNQAYDEEAGIIAATVTTAVALSADQADALRSTIAARFGMKSTQLDQVVDPSVIGGVRIQARGSVIDGTVKHRFDKMKAALLAD</sequence>
<keyword id="KW-0066">ATP synthesis</keyword>
<keyword id="KW-1003">Cell membrane</keyword>
<keyword id="KW-0139">CF(1)</keyword>
<keyword id="KW-0375">Hydrogen ion transport</keyword>
<keyword id="KW-0406">Ion transport</keyword>
<keyword id="KW-0472">Membrane</keyword>
<keyword id="KW-0813">Transport</keyword>
<dbReference type="EMBL" id="FM177140">
    <property type="protein sequence ID" value="CAQ66466.1"/>
    <property type="molecule type" value="Genomic_DNA"/>
</dbReference>
<dbReference type="SMR" id="B3WDL5"/>
<dbReference type="KEGG" id="lcb:LCABL_13850"/>
<dbReference type="HOGENOM" id="CLU_085114_4_1_9"/>
<dbReference type="GO" id="GO:0005886">
    <property type="term" value="C:plasma membrane"/>
    <property type="evidence" value="ECO:0007669"/>
    <property type="project" value="UniProtKB-SubCell"/>
</dbReference>
<dbReference type="GO" id="GO:0045259">
    <property type="term" value="C:proton-transporting ATP synthase complex"/>
    <property type="evidence" value="ECO:0007669"/>
    <property type="project" value="UniProtKB-KW"/>
</dbReference>
<dbReference type="GO" id="GO:0046933">
    <property type="term" value="F:proton-transporting ATP synthase activity, rotational mechanism"/>
    <property type="evidence" value="ECO:0007669"/>
    <property type="project" value="UniProtKB-UniRule"/>
</dbReference>
<dbReference type="Gene3D" id="1.10.520.20">
    <property type="entry name" value="N-terminal domain of the delta subunit of the F1F0-ATP synthase"/>
    <property type="match status" value="1"/>
</dbReference>
<dbReference type="HAMAP" id="MF_01416">
    <property type="entry name" value="ATP_synth_delta_bact"/>
    <property type="match status" value="1"/>
</dbReference>
<dbReference type="InterPro" id="IPR026015">
    <property type="entry name" value="ATP_synth_OSCP/delta_N_sf"/>
</dbReference>
<dbReference type="InterPro" id="IPR000711">
    <property type="entry name" value="ATPase_OSCP/dsu"/>
</dbReference>
<dbReference type="NCBIfam" id="TIGR01145">
    <property type="entry name" value="ATP_synt_delta"/>
    <property type="match status" value="1"/>
</dbReference>
<dbReference type="PANTHER" id="PTHR11910">
    <property type="entry name" value="ATP SYNTHASE DELTA CHAIN"/>
    <property type="match status" value="1"/>
</dbReference>
<dbReference type="Pfam" id="PF00213">
    <property type="entry name" value="OSCP"/>
    <property type="match status" value="1"/>
</dbReference>
<dbReference type="PRINTS" id="PR00125">
    <property type="entry name" value="ATPASEDELTA"/>
</dbReference>
<dbReference type="SUPFAM" id="SSF47928">
    <property type="entry name" value="N-terminal domain of the delta subunit of the F1F0-ATP synthase"/>
    <property type="match status" value="1"/>
</dbReference>
<accession>B3WDL5</accession>
<organism>
    <name type="scientific">Lacticaseibacillus casei (strain BL23)</name>
    <name type="common">Lactobacillus casei</name>
    <dbReference type="NCBI Taxonomy" id="543734"/>
    <lineage>
        <taxon>Bacteria</taxon>
        <taxon>Bacillati</taxon>
        <taxon>Bacillota</taxon>
        <taxon>Bacilli</taxon>
        <taxon>Lactobacillales</taxon>
        <taxon>Lactobacillaceae</taxon>
        <taxon>Lacticaseibacillus</taxon>
    </lineage>
</organism>
<reference key="1">
    <citation type="submission" date="2008-06" db="EMBL/GenBank/DDBJ databases">
        <title>Lactobacillus casei BL23 complete genome sequence.</title>
        <authorList>
            <person name="Maze A."/>
            <person name="Boel G."/>
            <person name="Bourand A."/>
            <person name="Loux V."/>
            <person name="Gibrat J.F."/>
            <person name="Zuniga M."/>
            <person name="Hartke A."/>
            <person name="Deutscher J."/>
        </authorList>
    </citation>
    <scope>NUCLEOTIDE SEQUENCE [LARGE SCALE GENOMIC DNA]</scope>
    <source>
        <strain>BL23</strain>
    </source>
</reference>
<protein>
    <recommendedName>
        <fullName evidence="1">ATP synthase subunit delta</fullName>
    </recommendedName>
    <alternativeName>
        <fullName evidence="1">ATP synthase F(1) sector subunit delta</fullName>
    </alternativeName>
    <alternativeName>
        <fullName evidence="1">F-type ATPase subunit delta</fullName>
        <shortName evidence="1">F-ATPase subunit delta</shortName>
    </alternativeName>
</protein>
<comment type="function">
    <text evidence="1">F(1)F(0) ATP synthase produces ATP from ADP in the presence of a proton or sodium gradient. F-type ATPases consist of two structural domains, F(1) containing the extramembraneous catalytic core and F(0) containing the membrane proton channel, linked together by a central stalk and a peripheral stalk. During catalysis, ATP synthesis in the catalytic domain of F(1) is coupled via a rotary mechanism of the central stalk subunits to proton translocation.</text>
</comment>
<comment type="function">
    <text evidence="1">This protein is part of the stalk that links CF(0) to CF(1). It either transmits conformational changes from CF(0) to CF(1) or is implicated in proton conduction.</text>
</comment>
<comment type="subunit">
    <text evidence="1">F-type ATPases have 2 components, F(1) - the catalytic core - and F(0) - the membrane proton channel. F(1) has five subunits: alpha(3), beta(3), gamma(1), delta(1), epsilon(1). F(0) has three main subunits: a(1), b(2) and c(10-14). The alpha and beta chains form an alternating ring which encloses part of the gamma chain. F(1) is attached to F(0) by a central stalk formed by the gamma and epsilon chains, while a peripheral stalk is formed by the delta and b chains.</text>
</comment>
<comment type="subcellular location">
    <subcellularLocation>
        <location evidence="1">Cell membrane</location>
        <topology evidence="1">Peripheral membrane protein</topology>
    </subcellularLocation>
</comment>
<comment type="similarity">
    <text evidence="1">Belongs to the ATPase delta chain family.</text>
</comment>
<proteinExistence type="inferred from homology"/>